<proteinExistence type="inferred from homology"/>
<keyword id="KW-0349">Heme</keyword>
<keyword id="KW-0408">Iron</keyword>
<keyword id="KW-0472">Membrane</keyword>
<keyword id="KW-0479">Metal-binding</keyword>
<keyword id="KW-0503">Monooxygenase</keyword>
<keyword id="KW-0560">Oxidoreductase</keyword>
<keyword id="KW-1185">Reference proteome</keyword>
<keyword id="KW-0812">Transmembrane</keyword>
<keyword id="KW-1133">Transmembrane helix</keyword>
<sequence>MSVILLAIPTLFIGFISYYLWIWTYWRRRGIPGPLGYPLVGSFPKTLKSEYPQYLQIRDWTKLYGPIYGYTEGTIKTLIVSDIDIVRQIFVEQYDNFYGRKLNPIQGDPEKDERTNLFSAQGFRWKRLRAISSPTFSNNSLRKINVTVEDSAMELLRHIEEQTSEGQQIDMLQFYQEFTMDTIGRIAMGQTDSQMFKNPLLKFVRAIFGDNRKHIPLIGGVFPTLAQVFRFFMLKFPLLGAANFIHVNKTVVTAVQNRIDQRENDRKNGIEIGEPQDFIDLFLEARADDVEHFQENNGDFSKTSSYGNRQLTTQEIVGQCLVFLIAGFDTTALSLSYTTFLLATHPEVQKKLQEEIERECIEPSISFDHLSKLKYMDCIIKETLRLYPLGTMANSRRCMRATKLGNVEVEVGTMVQVDTWSLHTDTKIWGDDAKEFKPERWLDPNCDQVFQKGGYISFGLGPRQCVGMRLAYMEEKMLLAHILRKYTFEVGTKTEIPLKLVGRATTQPETVWMHLKQRI</sequence>
<protein>
    <recommendedName>
        <fullName>Putative cytochrome P450 CYP13A10</fullName>
        <ecNumber>1.14.-.-</ecNumber>
    </recommendedName>
</protein>
<name>C13AA_CAEEL</name>
<dbReference type="EC" id="1.14.-.-"/>
<dbReference type="EMBL" id="Z46934">
    <property type="protein sequence ID" value="CAA87042.3"/>
    <property type="molecule type" value="Genomic_DNA"/>
</dbReference>
<dbReference type="PIR" id="T27750">
    <property type="entry name" value="T27750"/>
</dbReference>
<dbReference type="RefSeq" id="NP_496085.3">
    <property type="nucleotide sequence ID" value="NM_063684.4"/>
</dbReference>
<dbReference type="SMR" id="Q09653"/>
<dbReference type="FunCoup" id="Q09653">
    <property type="interactions" value="83"/>
</dbReference>
<dbReference type="STRING" id="6239.ZK1320.4.1"/>
<dbReference type="PaxDb" id="6239-ZK1320.4"/>
<dbReference type="EnsemblMetazoa" id="ZK1320.4.1">
    <property type="protein sequence ID" value="ZK1320.4.1"/>
    <property type="gene ID" value="WBGene00014254"/>
</dbReference>
<dbReference type="GeneID" id="174522"/>
<dbReference type="KEGG" id="cel:CELE_ZK1320.4"/>
<dbReference type="UCSC" id="ZK1320.4">
    <property type="organism name" value="c. elegans"/>
</dbReference>
<dbReference type="AGR" id="WB:WBGene00014254"/>
<dbReference type="CTD" id="174522"/>
<dbReference type="WormBase" id="ZK1320.4">
    <property type="protein sequence ID" value="CE37736"/>
    <property type="gene ID" value="WBGene00014254"/>
    <property type="gene designation" value="cyp-13A10"/>
</dbReference>
<dbReference type="eggNOG" id="KOG0158">
    <property type="taxonomic scope" value="Eukaryota"/>
</dbReference>
<dbReference type="GeneTree" id="ENSGT00970000196408"/>
<dbReference type="HOGENOM" id="CLU_001570_5_2_1"/>
<dbReference type="InParanoid" id="Q09653"/>
<dbReference type="OMA" id="CMRATKL"/>
<dbReference type="OrthoDB" id="2789670at2759"/>
<dbReference type="PhylomeDB" id="Q09653"/>
<dbReference type="PRO" id="PR:Q09653"/>
<dbReference type="Proteomes" id="UP000001940">
    <property type="component" value="Chromosome II"/>
</dbReference>
<dbReference type="Bgee" id="WBGene00014254">
    <property type="expression patterns" value="Expressed in embryo and 4 other cell types or tissues"/>
</dbReference>
<dbReference type="GO" id="GO:0016020">
    <property type="term" value="C:membrane"/>
    <property type="evidence" value="ECO:0007669"/>
    <property type="project" value="UniProtKB-SubCell"/>
</dbReference>
<dbReference type="GO" id="GO:0020037">
    <property type="term" value="F:heme binding"/>
    <property type="evidence" value="ECO:0007669"/>
    <property type="project" value="InterPro"/>
</dbReference>
<dbReference type="GO" id="GO:0005506">
    <property type="term" value="F:iron ion binding"/>
    <property type="evidence" value="ECO:0007669"/>
    <property type="project" value="InterPro"/>
</dbReference>
<dbReference type="GO" id="GO:0004497">
    <property type="term" value="F:monooxygenase activity"/>
    <property type="evidence" value="ECO:0007669"/>
    <property type="project" value="UniProtKB-KW"/>
</dbReference>
<dbReference type="GO" id="GO:0016705">
    <property type="term" value="F:oxidoreductase activity, acting on paired donors, with incorporation or reduction of molecular oxygen"/>
    <property type="evidence" value="ECO:0007669"/>
    <property type="project" value="InterPro"/>
</dbReference>
<dbReference type="CDD" id="cd11055">
    <property type="entry name" value="CYP3A-like"/>
    <property type="match status" value="1"/>
</dbReference>
<dbReference type="FunFam" id="1.10.630.10:FF:000182">
    <property type="entry name" value="Cytochrome P450 3A4"/>
    <property type="match status" value="1"/>
</dbReference>
<dbReference type="Gene3D" id="1.10.630.10">
    <property type="entry name" value="Cytochrome P450"/>
    <property type="match status" value="1"/>
</dbReference>
<dbReference type="InterPro" id="IPR001128">
    <property type="entry name" value="Cyt_P450"/>
</dbReference>
<dbReference type="InterPro" id="IPR017972">
    <property type="entry name" value="Cyt_P450_CS"/>
</dbReference>
<dbReference type="InterPro" id="IPR002401">
    <property type="entry name" value="Cyt_P450_E_grp-I"/>
</dbReference>
<dbReference type="InterPro" id="IPR036396">
    <property type="entry name" value="Cyt_P450_sf"/>
</dbReference>
<dbReference type="InterPro" id="IPR050476">
    <property type="entry name" value="Insect_CytP450_Detox"/>
</dbReference>
<dbReference type="PANTHER" id="PTHR24292">
    <property type="entry name" value="CYTOCHROME P450"/>
    <property type="match status" value="1"/>
</dbReference>
<dbReference type="PANTHER" id="PTHR24292:SF102">
    <property type="entry name" value="CYTOCHROME P450 FAMILY-RELATED"/>
    <property type="match status" value="1"/>
</dbReference>
<dbReference type="Pfam" id="PF00067">
    <property type="entry name" value="p450"/>
    <property type="match status" value="1"/>
</dbReference>
<dbReference type="PRINTS" id="PR00463">
    <property type="entry name" value="EP450I"/>
</dbReference>
<dbReference type="PRINTS" id="PR00385">
    <property type="entry name" value="P450"/>
</dbReference>
<dbReference type="SUPFAM" id="SSF48264">
    <property type="entry name" value="Cytochrome P450"/>
    <property type="match status" value="1"/>
</dbReference>
<dbReference type="PROSITE" id="PS00086">
    <property type="entry name" value="CYTOCHROME_P450"/>
    <property type="match status" value="1"/>
</dbReference>
<accession>Q09653</accession>
<comment type="function">
    <text>Cytochromes P450 are a group of heme-thiolate monooxygenases. They oxidize a variety of structurally unrelated compounds, including steroids, fatty acids, and xenobiotics.</text>
</comment>
<comment type="cofactor">
    <cofactor evidence="1">
        <name>heme</name>
        <dbReference type="ChEBI" id="CHEBI:30413"/>
    </cofactor>
</comment>
<comment type="subcellular location">
    <subcellularLocation>
        <location evidence="3">Membrane</location>
        <topology evidence="3">Single-pass membrane protein</topology>
    </subcellularLocation>
</comment>
<comment type="similarity">
    <text evidence="3">Belongs to the cytochrome P450 family.</text>
</comment>
<evidence type="ECO:0000250" key="1"/>
<evidence type="ECO:0000255" key="2"/>
<evidence type="ECO:0000305" key="3"/>
<reference key="1">
    <citation type="journal article" date="1998" name="Science">
        <title>Genome sequence of the nematode C. elegans: a platform for investigating biology.</title>
        <authorList>
            <consortium name="The C. elegans sequencing consortium"/>
        </authorList>
    </citation>
    <scope>NUCLEOTIDE SEQUENCE [LARGE SCALE GENOMIC DNA]</scope>
    <source>
        <strain>Bristol N2</strain>
    </source>
</reference>
<organism>
    <name type="scientific">Caenorhabditis elegans</name>
    <dbReference type="NCBI Taxonomy" id="6239"/>
    <lineage>
        <taxon>Eukaryota</taxon>
        <taxon>Metazoa</taxon>
        <taxon>Ecdysozoa</taxon>
        <taxon>Nematoda</taxon>
        <taxon>Chromadorea</taxon>
        <taxon>Rhabditida</taxon>
        <taxon>Rhabditina</taxon>
        <taxon>Rhabditomorpha</taxon>
        <taxon>Rhabditoidea</taxon>
        <taxon>Rhabditidae</taxon>
        <taxon>Peloderinae</taxon>
        <taxon>Caenorhabditis</taxon>
    </lineage>
</organism>
<feature type="chain" id="PRO_0000052269" description="Putative cytochrome P450 CYP13A10">
    <location>
        <begin position="1"/>
        <end position="519"/>
    </location>
</feature>
<feature type="transmembrane region" description="Helical" evidence="2">
    <location>
        <begin position="3"/>
        <end position="23"/>
    </location>
</feature>
<feature type="binding site" description="axial binding residue" evidence="1">
    <location>
        <position position="465"/>
    </location>
    <ligand>
        <name>heme</name>
        <dbReference type="ChEBI" id="CHEBI:30413"/>
    </ligand>
    <ligandPart>
        <name>Fe</name>
        <dbReference type="ChEBI" id="CHEBI:18248"/>
    </ligandPart>
</feature>
<gene>
    <name type="primary">cyp-13A10</name>
    <name type="synonym">cyp13a10</name>
    <name type="ORF">ZK1320.4</name>
</gene>